<sequence length="209" mass="23072">NILLSSTLFVLLMFQIIGSGLGCDMKVRGLDANMKKMILDLPNKKRQIVANGQQSGQPSAPNMKELHWNDEIAANAQRSGETGVFEPTAKSLRKTTKYSYLGENIYKGFYPDPIPKSVNGWYEEVKDVPPAVVKSFSSGGPMFGHYTQMVWANTEPLGCGLVTAFDRNSYLFCQYDPGGNYRSHPIYKQGPPASDCKNGKSSKYPGLCN</sequence>
<name>VA546_SCODE</name>
<comment type="function">
    <text evidence="4">May act as a voltage-gated calcium channel inhibitor.</text>
</comment>
<comment type="subcellular location">
    <subcellularLocation>
        <location evidence="1">Secreted</location>
    </subcellularLocation>
</comment>
<comment type="tissue specificity">
    <text evidence="4">Expressed by the venom gland.</text>
</comment>
<comment type="PTM">
    <text evidence="3">Contains 2 disulfide bonds.</text>
</comment>
<comment type="mass spectrometry" mass="20722.0" method="MALDI" evidence="1"/>
<comment type="similarity">
    <text evidence="3">Belongs to the CRISP family. Venom allergen 5-like subfamily.</text>
</comment>
<feature type="signal peptide" evidence="1">
    <location>
        <begin position="1" status="less than"/>
        <end position="22"/>
    </location>
</feature>
<feature type="chain" id="PRO_0000446846" description="Scoloptoxin SSD346" evidence="3">
    <location>
        <begin position="23"/>
        <end position="209"/>
    </location>
</feature>
<feature type="non-terminal residue">
    <location>
        <position position="1"/>
    </location>
</feature>
<protein>
    <recommendedName>
        <fullName evidence="2">Scoloptoxin SSD346</fullName>
    </recommendedName>
    <alternativeName>
        <fullName evidence="3">Cysteine-rich venom protein</fullName>
        <shortName evidence="3">CRVP</shortName>
    </alternativeName>
</protein>
<proteinExistence type="evidence at protein level"/>
<organism>
    <name type="scientific">Scolopendra dehaani</name>
    <name type="common">Thai centipede</name>
    <name type="synonym">Scolopendra subspinipes dehaani</name>
    <dbReference type="NCBI Taxonomy" id="2609776"/>
    <lineage>
        <taxon>Eukaryota</taxon>
        <taxon>Metazoa</taxon>
        <taxon>Ecdysozoa</taxon>
        <taxon>Arthropoda</taxon>
        <taxon>Myriapoda</taxon>
        <taxon>Chilopoda</taxon>
        <taxon>Pleurostigmophora</taxon>
        <taxon>Scolopendromorpha</taxon>
        <taxon>Scolopendridae</taxon>
        <taxon>Scolopendra</taxon>
    </lineage>
</organism>
<reference key="1">
    <citation type="journal article" date="2012" name="J. Proteome Res.">
        <title>Venomic and transcriptomic analysis of centipede Scolopendra subspinipes dehaani.</title>
        <authorList>
            <person name="Liu Z.C."/>
            <person name="Zhang R."/>
            <person name="Zhao F."/>
            <person name="Chen Z.M."/>
            <person name="Liu H.W."/>
            <person name="Wang Y.J."/>
            <person name="Jiang P."/>
            <person name="Zhang Y."/>
            <person name="Wu Y."/>
            <person name="Ding J.P."/>
            <person name="Lee W.H."/>
            <person name="Zhang Y."/>
        </authorList>
    </citation>
    <scope>NUCLEOTIDE SEQUENCE [MRNA]</scope>
    <scope>PROTEIN SEQUENCE OF 23-41</scope>
    <scope>SUBCELLULAR LOCATION</scope>
    <scope>MASS SPECTROMETRY</scope>
    <scope>FUNCTION</scope>
    <source>
        <tissue>Venom</tissue>
        <tissue>Venom gland</tissue>
    </source>
</reference>
<accession>P0DPU5</accession>
<keyword id="KW-0108">Calcium channel impairing toxin</keyword>
<keyword id="KW-0903">Direct protein sequencing</keyword>
<keyword id="KW-1015">Disulfide bond</keyword>
<keyword id="KW-0872">Ion channel impairing toxin</keyword>
<keyword id="KW-0964">Secreted</keyword>
<keyword id="KW-0732">Signal</keyword>
<keyword id="KW-0800">Toxin</keyword>
<keyword id="KW-1218">Voltage-gated calcium channel impairing toxin</keyword>
<dbReference type="EMBL" id="KC144347">
    <property type="status" value="NOT_ANNOTATED_CDS"/>
    <property type="molecule type" value="mRNA"/>
</dbReference>
<dbReference type="SMR" id="P0DPU5"/>
<dbReference type="GO" id="GO:0005576">
    <property type="term" value="C:extracellular region"/>
    <property type="evidence" value="ECO:0007669"/>
    <property type="project" value="UniProtKB-SubCell"/>
</dbReference>
<dbReference type="GO" id="GO:0005246">
    <property type="term" value="F:calcium channel regulator activity"/>
    <property type="evidence" value="ECO:0007669"/>
    <property type="project" value="UniProtKB-KW"/>
</dbReference>
<dbReference type="GO" id="GO:0090729">
    <property type="term" value="F:toxin activity"/>
    <property type="evidence" value="ECO:0007669"/>
    <property type="project" value="UniProtKB-KW"/>
</dbReference>
<dbReference type="CDD" id="cd05380">
    <property type="entry name" value="CAP_euk"/>
    <property type="match status" value="1"/>
</dbReference>
<dbReference type="Gene3D" id="3.40.33.10">
    <property type="entry name" value="CAP"/>
    <property type="match status" value="1"/>
</dbReference>
<dbReference type="InterPro" id="IPR018244">
    <property type="entry name" value="Allrgn_V5/Tpx1_CS"/>
</dbReference>
<dbReference type="InterPro" id="IPR014044">
    <property type="entry name" value="CAP_dom"/>
</dbReference>
<dbReference type="InterPro" id="IPR035940">
    <property type="entry name" value="CAP_sf"/>
</dbReference>
<dbReference type="InterPro" id="IPR001283">
    <property type="entry name" value="CRISP-related"/>
</dbReference>
<dbReference type="InterPro" id="IPR002413">
    <property type="entry name" value="V5_allergen-like"/>
</dbReference>
<dbReference type="PANTHER" id="PTHR10334">
    <property type="entry name" value="CYSTEINE-RICH SECRETORY PROTEIN-RELATED"/>
    <property type="match status" value="1"/>
</dbReference>
<dbReference type="Pfam" id="PF00188">
    <property type="entry name" value="CAP"/>
    <property type="match status" value="1"/>
</dbReference>
<dbReference type="PRINTS" id="PR00838">
    <property type="entry name" value="V5ALLERGEN"/>
</dbReference>
<dbReference type="PRINTS" id="PR00837">
    <property type="entry name" value="V5TPXLIKE"/>
</dbReference>
<dbReference type="SMART" id="SM00198">
    <property type="entry name" value="SCP"/>
    <property type="match status" value="1"/>
</dbReference>
<dbReference type="SUPFAM" id="SSF55797">
    <property type="entry name" value="PR-1-like"/>
    <property type="match status" value="1"/>
</dbReference>
<dbReference type="PROSITE" id="PS01009">
    <property type="entry name" value="CRISP_1"/>
    <property type="match status" value="1"/>
</dbReference>
<dbReference type="PROSITE" id="PS01010">
    <property type="entry name" value="CRISP_2"/>
    <property type="match status" value="1"/>
</dbReference>
<evidence type="ECO:0000269" key="1">
    <source>
    </source>
</evidence>
<evidence type="ECO:0000303" key="2">
    <source>
    </source>
</evidence>
<evidence type="ECO:0000305" key="3"/>
<evidence type="ECO:0000305" key="4">
    <source>
    </source>
</evidence>